<comment type="function">
    <text evidence="2">Binds specifically to cytosolic chaperonin (c-CPN) and transfers target proteins to it. Binds to nascent polypeptide chain and promotes folding in an environment in which there are many competing pathways for nonnative proteins (By similarity).</text>
</comment>
<comment type="subunit">
    <text evidence="2">Heterohexamer of two PFD-alpha type and four PFD-beta type subunits.</text>
</comment>
<comment type="similarity">
    <text evidence="3">Belongs to the prefoldin subunit alpha family.</text>
</comment>
<evidence type="ECO:0000250" key="1">
    <source>
        <dbReference type="UniProtKB" id="Q21993"/>
    </source>
</evidence>
<evidence type="ECO:0000250" key="2">
    <source>
        <dbReference type="UniProtKB" id="Q99471"/>
    </source>
</evidence>
<evidence type="ECO:0000255" key="3"/>
<evidence type="ECO:0000312" key="4">
    <source>
        <dbReference type="EMBL" id="CAP34538.2"/>
    </source>
</evidence>
<proteinExistence type="inferred from homology"/>
<gene>
    <name evidence="4" type="primary">pfd-5</name>
    <name type="ORF">CBG16620</name>
</gene>
<name>PFD5_CAEBR</name>
<reference evidence="4" key="1">
    <citation type="journal article" date="2003" name="PLoS Biol.">
        <title>The genome sequence of Caenorhabditis briggsae: a platform for comparative genomics.</title>
        <authorList>
            <person name="Stein L.D."/>
            <person name="Bao Z."/>
            <person name="Blasiar D."/>
            <person name="Blumenthal T."/>
            <person name="Brent M.R."/>
            <person name="Chen N."/>
            <person name="Chinwalla A."/>
            <person name="Clarke L."/>
            <person name="Clee C."/>
            <person name="Coghlan A."/>
            <person name="Coulson A."/>
            <person name="D'Eustachio P."/>
            <person name="Fitch D.H.A."/>
            <person name="Fulton L.A."/>
            <person name="Fulton R.E."/>
            <person name="Griffiths-Jones S."/>
            <person name="Harris T.W."/>
            <person name="Hillier L.W."/>
            <person name="Kamath R."/>
            <person name="Kuwabara P.E."/>
            <person name="Mardis E.R."/>
            <person name="Marra M.A."/>
            <person name="Miner T.L."/>
            <person name="Minx P."/>
            <person name="Mullikin J.C."/>
            <person name="Plumb R.W."/>
            <person name="Rogers J."/>
            <person name="Schein J.E."/>
            <person name="Sohrmann M."/>
            <person name="Spieth J."/>
            <person name="Stajich J.E."/>
            <person name="Wei C."/>
            <person name="Willey D."/>
            <person name="Wilson R.K."/>
            <person name="Durbin R.M."/>
            <person name="Waterston R.H."/>
        </authorList>
    </citation>
    <scope>NUCLEOTIDE SEQUENCE [LARGE SCALE GENOMIC DNA]</scope>
    <source>
        <strain>AF16</strain>
    </source>
</reference>
<accession>A8XPL7</accession>
<organism>
    <name type="scientific">Caenorhabditis briggsae</name>
    <dbReference type="NCBI Taxonomy" id="6238"/>
    <lineage>
        <taxon>Eukaryota</taxon>
        <taxon>Metazoa</taxon>
        <taxon>Ecdysozoa</taxon>
        <taxon>Nematoda</taxon>
        <taxon>Chromadorea</taxon>
        <taxon>Rhabditida</taxon>
        <taxon>Rhabditina</taxon>
        <taxon>Rhabditomorpha</taxon>
        <taxon>Rhabditoidea</taxon>
        <taxon>Rhabditidae</taxon>
        <taxon>Peloderinae</taxon>
        <taxon>Caenorhabditis</taxon>
    </lineage>
</organism>
<sequence>MTEEQRGVPLSELSLQQLGELQKNCEQELTFFQDSFNALKALLSRNEKSISALEDVKVGTAGHTALIPLSESLYIRAELSDPNKHMVEIGTGYFVELDREKAKGIFDRKKEHIAKQVETVEGILKEKRRTRAYISDAFQTKVQAQLANMNTQQS</sequence>
<keyword id="KW-0143">Chaperone</keyword>
<keyword id="KW-1185">Reference proteome</keyword>
<dbReference type="EMBL" id="HE600949">
    <property type="protein sequence ID" value="CAP34538.2"/>
    <property type="molecule type" value="Genomic_DNA"/>
</dbReference>
<dbReference type="SMR" id="A8XPL7"/>
<dbReference type="FunCoup" id="A8XPL7">
    <property type="interactions" value="2488"/>
</dbReference>
<dbReference type="STRING" id="6238.A8XPL7"/>
<dbReference type="EnsemblMetazoa" id="CBG16620.1">
    <property type="protein sequence ID" value="CBG16620.1"/>
    <property type="gene ID" value="WBGene00036507"/>
</dbReference>
<dbReference type="WormBase" id="CBG16620">
    <property type="protein sequence ID" value="CBP25483"/>
    <property type="gene ID" value="WBGene00036507"/>
    <property type="gene designation" value="Cbr-pfd-5"/>
</dbReference>
<dbReference type="eggNOG" id="KOG3048">
    <property type="taxonomic scope" value="Eukaryota"/>
</dbReference>
<dbReference type="HOGENOM" id="CLU_091867_0_1_1"/>
<dbReference type="InParanoid" id="A8XPL7"/>
<dbReference type="OMA" id="QAKFKAC"/>
<dbReference type="OrthoDB" id="10267474at2759"/>
<dbReference type="Proteomes" id="UP000008549">
    <property type="component" value="Unassembled WGS sequence"/>
</dbReference>
<dbReference type="GO" id="GO:0005737">
    <property type="term" value="C:cytoplasm"/>
    <property type="evidence" value="ECO:0000318"/>
    <property type="project" value="GO_Central"/>
</dbReference>
<dbReference type="GO" id="GO:0016272">
    <property type="term" value="C:prefoldin complex"/>
    <property type="evidence" value="ECO:0000318"/>
    <property type="project" value="GO_Central"/>
</dbReference>
<dbReference type="GO" id="GO:0051082">
    <property type="term" value="F:unfolded protein binding"/>
    <property type="evidence" value="ECO:0007669"/>
    <property type="project" value="InterPro"/>
</dbReference>
<dbReference type="GO" id="GO:0006457">
    <property type="term" value="P:protein folding"/>
    <property type="evidence" value="ECO:0007669"/>
    <property type="project" value="InterPro"/>
</dbReference>
<dbReference type="GO" id="GO:1990113">
    <property type="term" value="P:RNA polymerase I assembly"/>
    <property type="evidence" value="ECO:0000318"/>
    <property type="project" value="GO_Central"/>
</dbReference>
<dbReference type="GO" id="GO:1990114">
    <property type="term" value="P:RNA polymerase II core complex assembly"/>
    <property type="evidence" value="ECO:0000318"/>
    <property type="project" value="GO_Central"/>
</dbReference>
<dbReference type="GO" id="GO:1990115">
    <property type="term" value="P:RNA polymerase III assembly"/>
    <property type="evidence" value="ECO:0000318"/>
    <property type="project" value="GO_Central"/>
</dbReference>
<dbReference type="CDD" id="cd23157">
    <property type="entry name" value="Prefoldin_5"/>
    <property type="match status" value="1"/>
</dbReference>
<dbReference type="FunFam" id="1.10.287.370:FF:000039">
    <property type="entry name" value="Probable prefoldin subunit 5"/>
    <property type="match status" value="1"/>
</dbReference>
<dbReference type="Gene3D" id="1.10.287.370">
    <property type="match status" value="1"/>
</dbReference>
<dbReference type="InterPro" id="IPR011599">
    <property type="entry name" value="PFD_alpha_archaea"/>
</dbReference>
<dbReference type="InterPro" id="IPR009053">
    <property type="entry name" value="Prefoldin"/>
</dbReference>
<dbReference type="InterPro" id="IPR004127">
    <property type="entry name" value="Prefoldin_subunit_alpha"/>
</dbReference>
<dbReference type="NCBIfam" id="TIGR00293">
    <property type="entry name" value="prefoldin subunit alpha"/>
    <property type="match status" value="1"/>
</dbReference>
<dbReference type="PANTHER" id="PTHR12674">
    <property type="entry name" value="PREFOLDIN SUBUNIT 5"/>
    <property type="match status" value="1"/>
</dbReference>
<dbReference type="PANTHER" id="PTHR12674:SF2">
    <property type="entry name" value="PREFOLDIN SUBUNIT 5"/>
    <property type="match status" value="1"/>
</dbReference>
<dbReference type="Pfam" id="PF02996">
    <property type="entry name" value="Prefoldin"/>
    <property type="match status" value="1"/>
</dbReference>
<dbReference type="SUPFAM" id="SSF46579">
    <property type="entry name" value="Prefoldin"/>
    <property type="match status" value="1"/>
</dbReference>
<protein>
    <recommendedName>
        <fullName evidence="1">Probable prefoldin subunit 5</fullName>
    </recommendedName>
</protein>
<feature type="chain" id="PRO_0000395430" description="Probable prefoldin subunit 5">
    <location>
        <begin position="1"/>
        <end position="154"/>
    </location>
</feature>